<geneLocation type="chloroplast"/>
<proteinExistence type="inferred from homology"/>
<protein>
    <recommendedName>
        <fullName>Uncharacterized protein ycf23</fullName>
    </recommendedName>
</protein>
<evidence type="ECO:0000305" key="1"/>
<gene>
    <name type="primary">ycf23</name>
</gene>
<reference key="1">
    <citation type="submission" date="1994-05" db="EMBL/GenBank/DDBJ databases">
        <authorList>
            <person name="Valentin K.-U."/>
        </authorList>
    </citation>
    <scope>NUCLEOTIDE SEQUENCE [GENOMIC DNA]</scope>
</reference>
<sequence>MNLRNNKLHSSFIQRKAIKVISGINNFNVGQIFKIIHACEISKATYVDVARNPKIVSFIKSISSIPVCVSSIDPRALYESVLAGADLVEIGNFDCFYTNGVYLSNDQIIAIVKQVKYLLPYTDICVTIPHILKLHEQIYLAQKLESLGINLLQTEGSITNFSNEKLLEAKKINDNILYSTSMACCALSSVYSISKVVSLPVIASSGINGISASVALSYGASGIGIRSSVSKLGNIIDMSNYIDEMIFSTSKKLYDIDQNNLLYMATSNLSLNKCSII</sequence>
<feature type="chain" id="PRO_0000217336" description="Uncharacterized protein ycf23">
    <location>
        <begin position="1"/>
        <end position="277"/>
    </location>
</feature>
<dbReference type="EMBL" id="Z33874">
    <property type="protein sequence ID" value="CAA83938.1"/>
    <property type="molecule type" value="Genomic_DNA"/>
</dbReference>
<dbReference type="GO" id="GO:0009507">
    <property type="term" value="C:chloroplast"/>
    <property type="evidence" value="ECO:0007669"/>
    <property type="project" value="UniProtKB-SubCell"/>
</dbReference>
<dbReference type="InterPro" id="IPR007570">
    <property type="entry name" value="Uncharacterised_Ycf23"/>
</dbReference>
<dbReference type="PANTHER" id="PTHR36895">
    <property type="match status" value="1"/>
</dbReference>
<dbReference type="PANTHER" id="PTHR36895:SF1">
    <property type="entry name" value="YCF23 PROTEIN"/>
    <property type="match status" value="1"/>
</dbReference>
<dbReference type="Pfam" id="PF04481">
    <property type="entry name" value="DUF561"/>
    <property type="match status" value="1"/>
</dbReference>
<dbReference type="SUPFAM" id="SSF51395">
    <property type="entry name" value="FMN-linked oxidoreductases"/>
    <property type="match status" value="1"/>
</dbReference>
<keyword id="KW-0150">Chloroplast</keyword>
<keyword id="KW-0934">Plastid</keyword>
<organism>
    <name type="scientific">Antithamnion sp.</name>
    <name type="common">Red alga</name>
    <dbReference type="NCBI Taxonomy" id="2767"/>
    <lineage>
        <taxon>Eukaryota</taxon>
        <taxon>Rhodophyta</taxon>
        <taxon>Florideophyceae</taxon>
        <taxon>Rhodymeniophycidae</taxon>
        <taxon>Ceramiales</taxon>
        <taxon>Ceramiaceae</taxon>
        <taxon>Antithamnion</taxon>
    </lineage>
</organism>
<comment type="subcellular location">
    <subcellularLocation>
        <location>Plastid</location>
        <location>Chloroplast</location>
    </subcellularLocation>
</comment>
<comment type="similarity">
    <text evidence="1">Belongs to the ycf23 family.</text>
</comment>
<name>YCF23_ANTSP</name>
<accession>P46314</accession>